<accession>Q6FFH9</accession>
<proteinExistence type="inferred from homology"/>
<name>TSAC_ACIAD</name>
<evidence type="ECO:0000255" key="1">
    <source>
        <dbReference type="HAMAP-Rule" id="MF_01852"/>
    </source>
</evidence>
<organism>
    <name type="scientific">Acinetobacter baylyi (strain ATCC 33305 / BD413 / ADP1)</name>
    <dbReference type="NCBI Taxonomy" id="62977"/>
    <lineage>
        <taxon>Bacteria</taxon>
        <taxon>Pseudomonadati</taxon>
        <taxon>Pseudomonadota</taxon>
        <taxon>Gammaproteobacteria</taxon>
        <taxon>Moraxellales</taxon>
        <taxon>Moraxellaceae</taxon>
        <taxon>Acinetobacter</taxon>
    </lineage>
</organism>
<dbReference type="EC" id="2.7.7.87" evidence="1"/>
<dbReference type="EMBL" id="CR543861">
    <property type="protein sequence ID" value="CAG67178.1"/>
    <property type="molecule type" value="Genomic_DNA"/>
</dbReference>
<dbReference type="SMR" id="Q6FFH9"/>
<dbReference type="STRING" id="202950.GCA_001485005_01938"/>
<dbReference type="KEGG" id="aci:ACIAD0208"/>
<dbReference type="eggNOG" id="COG0009">
    <property type="taxonomic scope" value="Bacteria"/>
</dbReference>
<dbReference type="HOGENOM" id="CLU_031397_6_0_6"/>
<dbReference type="Proteomes" id="UP000000430">
    <property type="component" value="Chromosome"/>
</dbReference>
<dbReference type="GO" id="GO:0005737">
    <property type="term" value="C:cytoplasm"/>
    <property type="evidence" value="ECO:0007669"/>
    <property type="project" value="UniProtKB-SubCell"/>
</dbReference>
<dbReference type="GO" id="GO:0005524">
    <property type="term" value="F:ATP binding"/>
    <property type="evidence" value="ECO:0007669"/>
    <property type="project" value="UniProtKB-UniRule"/>
</dbReference>
<dbReference type="GO" id="GO:0003725">
    <property type="term" value="F:double-stranded RNA binding"/>
    <property type="evidence" value="ECO:0007669"/>
    <property type="project" value="InterPro"/>
</dbReference>
<dbReference type="GO" id="GO:0061710">
    <property type="term" value="F:L-threonylcarbamoyladenylate synthase"/>
    <property type="evidence" value="ECO:0007669"/>
    <property type="project" value="UniProtKB-EC"/>
</dbReference>
<dbReference type="GO" id="GO:0000049">
    <property type="term" value="F:tRNA binding"/>
    <property type="evidence" value="ECO:0007669"/>
    <property type="project" value="TreeGrafter"/>
</dbReference>
<dbReference type="GO" id="GO:0006450">
    <property type="term" value="P:regulation of translational fidelity"/>
    <property type="evidence" value="ECO:0007669"/>
    <property type="project" value="TreeGrafter"/>
</dbReference>
<dbReference type="GO" id="GO:0002949">
    <property type="term" value="P:tRNA threonylcarbamoyladenosine modification"/>
    <property type="evidence" value="ECO:0007669"/>
    <property type="project" value="UniProtKB-UniRule"/>
</dbReference>
<dbReference type="Gene3D" id="3.90.870.10">
    <property type="entry name" value="DHBP synthase"/>
    <property type="match status" value="1"/>
</dbReference>
<dbReference type="HAMAP" id="MF_01852">
    <property type="entry name" value="TsaC"/>
    <property type="match status" value="1"/>
</dbReference>
<dbReference type="InterPro" id="IPR017945">
    <property type="entry name" value="DHBP_synth_RibB-like_a/b_dom"/>
</dbReference>
<dbReference type="InterPro" id="IPR006070">
    <property type="entry name" value="Sua5-like_dom"/>
</dbReference>
<dbReference type="InterPro" id="IPR023535">
    <property type="entry name" value="TC-AMP_synthase"/>
</dbReference>
<dbReference type="InterPro" id="IPR050156">
    <property type="entry name" value="TC-AMP_synthase_SUA5"/>
</dbReference>
<dbReference type="PANTHER" id="PTHR17490">
    <property type="entry name" value="SUA5"/>
    <property type="match status" value="1"/>
</dbReference>
<dbReference type="PANTHER" id="PTHR17490:SF18">
    <property type="entry name" value="THREONYLCARBAMOYL-AMP SYNTHASE"/>
    <property type="match status" value="1"/>
</dbReference>
<dbReference type="Pfam" id="PF01300">
    <property type="entry name" value="Sua5_yciO_yrdC"/>
    <property type="match status" value="1"/>
</dbReference>
<dbReference type="SUPFAM" id="SSF55821">
    <property type="entry name" value="YrdC/RibB"/>
    <property type="match status" value="1"/>
</dbReference>
<dbReference type="PROSITE" id="PS51163">
    <property type="entry name" value="YRDC"/>
    <property type="match status" value="1"/>
</dbReference>
<gene>
    <name evidence="1" type="primary">tsaC</name>
    <name type="synonym">rimN</name>
    <name type="ordered locus">ACIAD0208</name>
</gene>
<reference key="1">
    <citation type="journal article" date="2004" name="Nucleic Acids Res.">
        <title>Unique features revealed by the genome sequence of Acinetobacter sp. ADP1, a versatile and naturally transformation competent bacterium.</title>
        <authorList>
            <person name="Barbe V."/>
            <person name="Vallenet D."/>
            <person name="Fonknechten N."/>
            <person name="Kreimeyer A."/>
            <person name="Oztas S."/>
            <person name="Labarre L."/>
            <person name="Cruveiller S."/>
            <person name="Robert C."/>
            <person name="Duprat S."/>
            <person name="Wincker P."/>
            <person name="Ornston L.N."/>
            <person name="Weissenbach J."/>
            <person name="Marliere P."/>
            <person name="Cohen G.N."/>
            <person name="Medigue C."/>
        </authorList>
    </citation>
    <scope>NUCLEOTIDE SEQUENCE [LARGE SCALE GENOMIC DNA]</scope>
    <source>
        <strain>ATCC 33305 / BD413 / ADP1</strain>
    </source>
</reference>
<protein>
    <recommendedName>
        <fullName evidence="1">Threonylcarbamoyl-AMP synthase</fullName>
        <shortName evidence="1">TC-AMP synthase</shortName>
        <ecNumber evidence="1">2.7.7.87</ecNumber>
    </recommendedName>
    <alternativeName>
        <fullName evidence="1">L-threonylcarbamoyladenylate synthase</fullName>
    </alternativeName>
    <alternativeName>
        <fullName evidence="1">t(6)A37 threonylcarbamoyladenosine biosynthesis protein TsaC</fullName>
    </alternativeName>
    <alternativeName>
        <fullName evidence="1">tRNA threonylcarbamoyladenosine biosynthesis protein TsaC</fullName>
    </alternativeName>
</protein>
<sequence>MIMLTTSVAEAAHCLKQGQVLAYPTEAVWGLGCDPFNELAFRQILALKQRPIEKGVILLAGDVGQIEYLLADLDETIRAQVIESWTTRSVDERAITWLLPVSSDQVPTWITGQHHQVAVRVTNHPLCVALCHAFNGFIVSTSANPAGLEPARSLQEASAYFGQGLNYLNGDLGLSQQPSRIIDATTGRVIRD</sequence>
<feature type="chain" id="PRO_0000352890" description="Threonylcarbamoyl-AMP synthase">
    <location>
        <begin position="1"/>
        <end position="192"/>
    </location>
</feature>
<feature type="domain" description="YrdC-like" evidence="1">
    <location>
        <begin position="5"/>
        <end position="192"/>
    </location>
</feature>
<comment type="function">
    <text evidence="1">Required for the formation of a threonylcarbamoyl group on adenosine at position 37 (t(6)A37) in tRNAs that read codons beginning with adenine. Catalyzes the conversion of L-threonine, HCO(3)(-)/CO(2) and ATP to give threonylcarbamoyl-AMP (TC-AMP) as the acyladenylate intermediate, with the release of diphosphate.</text>
</comment>
<comment type="catalytic activity">
    <reaction evidence="1">
        <text>L-threonine + hydrogencarbonate + ATP = L-threonylcarbamoyladenylate + diphosphate + H2O</text>
        <dbReference type="Rhea" id="RHEA:36407"/>
        <dbReference type="ChEBI" id="CHEBI:15377"/>
        <dbReference type="ChEBI" id="CHEBI:17544"/>
        <dbReference type="ChEBI" id="CHEBI:30616"/>
        <dbReference type="ChEBI" id="CHEBI:33019"/>
        <dbReference type="ChEBI" id="CHEBI:57926"/>
        <dbReference type="ChEBI" id="CHEBI:73682"/>
        <dbReference type="EC" id="2.7.7.87"/>
    </reaction>
</comment>
<comment type="subcellular location">
    <subcellularLocation>
        <location evidence="1">Cytoplasm</location>
    </subcellularLocation>
</comment>
<comment type="similarity">
    <text evidence="1">Belongs to the SUA5 family. TsaC subfamily.</text>
</comment>
<keyword id="KW-0067">ATP-binding</keyword>
<keyword id="KW-0963">Cytoplasm</keyword>
<keyword id="KW-0547">Nucleotide-binding</keyword>
<keyword id="KW-0548">Nucleotidyltransferase</keyword>
<keyword id="KW-0808">Transferase</keyword>
<keyword id="KW-0819">tRNA processing</keyword>